<feature type="chain" id="PRO_1000074787" description="D-alanine--D-alanine ligase">
    <location>
        <begin position="1"/>
        <end position="336"/>
    </location>
</feature>
<feature type="domain" description="ATP-grasp" evidence="2">
    <location>
        <begin position="124"/>
        <end position="330"/>
    </location>
</feature>
<feature type="binding site" evidence="2">
    <location>
        <begin position="154"/>
        <end position="209"/>
    </location>
    <ligand>
        <name>ATP</name>
        <dbReference type="ChEBI" id="CHEBI:30616"/>
    </ligand>
</feature>
<feature type="binding site" evidence="2">
    <location>
        <position position="284"/>
    </location>
    <ligand>
        <name>Mg(2+)</name>
        <dbReference type="ChEBI" id="CHEBI:18420"/>
        <label>1</label>
    </ligand>
</feature>
<feature type="binding site" evidence="2">
    <location>
        <position position="297"/>
    </location>
    <ligand>
        <name>Mg(2+)</name>
        <dbReference type="ChEBI" id="CHEBI:18420"/>
        <label>1</label>
    </ligand>
</feature>
<feature type="binding site" evidence="2">
    <location>
        <position position="297"/>
    </location>
    <ligand>
        <name>Mg(2+)</name>
        <dbReference type="ChEBI" id="CHEBI:18420"/>
        <label>2</label>
    </ligand>
</feature>
<feature type="binding site" evidence="2">
    <location>
        <position position="299"/>
    </location>
    <ligand>
        <name>Mg(2+)</name>
        <dbReference type="ChEBI" id="CHEBI:18420"/>
        <label>2</label>
    </ligand>
</feature>
<name>DDL_SHEFN</name>
<reference key="1">
    <citation type="submission" date="2006-08" db="EMBL/GenBank/DDBJ databases">
        <title>Complete sequence of Shewanella frigidimarina NCIMB 400.</title>
        <authorList>
            <consortium name="US DOE Joint Genome Institute"/>
            <person name="Copeland A."/>
            <person name="Lucas S."/>
            <person name="Lapidus A."/>
            <person name="Barry K."/>
            <person name="Detter J.C."/>
            <person name="Glavina del Rio T."/>
            <person name="Hammon N."/>
            <person name="Israni S."/>
            <person name="Dalin E."/>
            <person name="Tice H."/>
            <person name="Pitluck S."/>
            <person name="Fredrickson J.K."/>
            <person name="Kolker E."/>
            <person name="McCuel L.A."/>
            <person name="DiChristina T."/>
            <person name="Nealson K.H."/>
            <person name="Newman D."/>
            <person name="Tiedje J.M."/>
            <person name="Zhou J."/>
            <person name="Romine M.F."/>
            <person name="Culley D.E."/>
            <person name="Serres M."/>
            <person name="Chertkov O."/>
            <person name="Brettin T."/>
            <person name="Bruce D."/>
            <person name="Han C."/>
            <person name="Tapia R."/>
            <person name="Gilna P."/>
            <person name="Schmutz J."/>
            <person name="Larimer F."/>
            <person name="Land M."/>
            <person name="Hauser L."/>
            <person name="Kyrpides N."/>
            <person name="Mikhailova N."/>
            <person name="Richardson P."/>
        </authorList>
    </citation>
    <scope>NUCLEOTIDE SEQUENCE [LARGE SCALE GENOMIC DNA]</scope>
    <source>
        <strain>NCIMB 400</strain>
    </source>
</reference>
<comment type="function">
    <text evidence="2">Cell wall formation.</text>
</comment>
<comment type="catalytic activity">
    <reaction evidence="2">
        <text>2 D-alanine + ATP = D-alanyl-D-alanine + ADP + phosphate + H(+)</text>
        <dbReference type="Rhea" id="RHEA:11224"/>
        <dbReference type="ChEBI" id="CHEBI:15378"/>
        <dbReference type="ChEBI" id="CHEBI:30616"/>
        <dbReference type="ChEBI" id="CHEBI:43474"/>
        <dbReference type="ChEBI" id="CHEBI:57416"/>
        <dbReference type="ChEBI" id="CHEBI:57822"/>
        <dbReference type="ChEBI" id="CHEBI:456216"/>
        <dbReference type="EC" id="6.3.2.4"/>
    </reaction>
</comment>
<comment type="cofactor">
    <cofactor evidence="1">
        <name>Mg(2+)</name>
        <dbReference type="ChEBI" id="CHEBI:18420"/>
    </cofactor>
    <cofactor evidence="1">
        <name>Mn(2+)</name>
        <dbReference type="ChEBI" id="CHEBI:29035"/>
    </cofactor>
    <text evidence="1">Binds 2 magnesium or manganese ions per subunit.</text>
</comment>
<comment type="pathway">
    <text evidence="2">Cell wall biogenesis; peptidoglycan biosynthesis.</text>
</comment>
<comment type="subcellular location">
    <subcellularLocation>
        <location evidence="2">Cytoplasm</location>
    </subcellularLocation>
</comment>
<comment type="similarity">
    <text evidence="2">Belongs to the D-alanine--D-alanine ligase family.</text>
</comment>
<keyword id="KW-0067">ATP-binding</keyword>
<keyword id="KW-0133">Cell shape</keyword>
<keyword id="KW-0961">Cell wall biogenesis/degradation</keyword>
<keyword id="KW-0963">Cytoplasm</keyword>
<keyword id="KW-0436">Ligase</keyword>
<keyword id="KW-0460">Magnesium</keyword>
<keyword id="KW-0464">Manganese</keyword>
<keyword id="KW-0479">Metal-binding</keyword>
<keyword id="KW-0547">Nucleotide-binding</keyword>
<keyword id="KW-0573">Peptidoglycan synthesis</keyword>
<keyword id="KW-1185">Reference proteome</keyword>
<proteinExistence type="inferred from homology"/>
<protein>
    <recommendedName>
        <fullName evidence="2">D-alanine--D-alanine ligase</fullName>
        <ecNumber evidence="2">6.3.2.4</ecNumber>
    </recommendedName>
    <alternativeName>
        <fullName evidence="2">D-Ala-D-Ala ligase</fullName>
    </alternativeName>
    <alternativeName>
        <fullName evidence="2">D-alanylalanine synthetase</fullName>
    </alternativeName>
</protein>
<sequence>MPKINLLLLCGGGGAEHDISLMSARFFESSLAKSDKFSVLKLVLDKHGHYHTEDGKLCDLTNRREIRFEDNSTPAWSVDYVIPCIHGFPGETGDIQSYFNLIQLPYFGCESEASSNCFNKITAKMWFSALGVPNTPYIFLHQLDDDAIKQTETAFDNWGSVFVKAASQGSSVGCYKVDVKANIANVLKDAFSYAPYVVVEQTIHARELEVAVYQYQGEVVATLPGEIICDSNTFYSFDEKYATNSKARTDVVADNLSPEISQLIRDYAVKAFKGMKLRHLSRIDFFLTADNQILLNEINTFPGLTPISMFPKMLQNHGHNFTEYLIDVIGQQVDLT</sequence>
<evidence type="ECO:0000250" key="1"/>
<evidence type="ECO:0000255" key="2">
    <source>
        <dbReference type="HAMAP-Rule" id="MF_00047"/>
    </source>
</evidence>
<dbReference type="EC" id="6.3.2.4" evidence="2"/>
<dbReference type="EMBL" id="CP000447">
    <property type="protein sequence ID" value="ABI72392.1"/>
    <property type="molecule type" value="Genomic_DNA"/>
</dbReference>
<dbReference type="RefSeq" id="WP_011638001.1">
    <property type="nucleotide sequence ID" value="NC_008345.1"/>
</dbReference>
<dbReference type="SMR" id="Q080C3"/>
<dbReference type="STRING" id="318167.Sfri_2550"/>
<dbReference type="KEGG" id="sfr:Sfri_2550"/>
<dbReference type="eggNOG" id="COG1181">
    <property type="taxonomic scope" value="Bacteria"/>
</dbReference>
<dbReference type="HOGENOM" id="CLU_039268_0_0_6"/>
<dbReference type="OrthoDB" id="9813261at2"/>
<dbReference type="UniPathway" id="UPA00219"/>
<dbReference type="Proteomes" id="UP000000684">
    <property type="component" value="Chromosome"/>
</dbReference>
<dbReference type="GO" id="GO:0005829">
    <property type="term" value="C:cytosol"/>
    <property type="evidence" value="ECO:0007669"/>
    <property type="project" value="TreeGrafter"/>
</dbReference>
<dbReference type="GO" id="GO:0005524">
    <property type="term" value="F:ATP binding"/>
    <property type="evidence" value="ECO:0007669"/>
    <property type="project" value="UniProtKB-KW"/>
</dbReference>
<dbReference type="GO" id="GO:0008716">
    <property type="term" value="F:D-alanine-D-alanine ligase activity"/>
    <property type="evidence" value="ECO:0007669"/>
    <property type="project" value="UniProtKB-UniRule"/>
</dbReference>
<dbReference type="GO" id="GO:0046872">
    <property type="term" value="F:metal ion binding"/>
    <property type="evidence" value="ECO:0007669"/>
    <property type="project" value="UniProtKB-KW"/>
</dbReference>
<dbReference type="GO" id="GO:0071555">
    <property type="term" value="P:cell wall organization"/>
    <property type="evidence" value="ECO:0007669"/>
    <property type="project" value="UniProtKB-KW"/>
</dbReference>
<dbReference type="GO" id="GO:0009252">
    <property type="term" value="P:peptidoglycan biosynthetic process"/>
    <property type="evidence" value="ECO:0007669"/>
    <property type="project" value="UniProtKB-UniRule"/>
</dbReference>
<dbReference type="GO" id="GO:0008360">
    <property type="term" value="P:regulation of cell shape"/>
    <property type="evidence" value="ECO:0007669"/>
    <property type="project" value="UniProtKB-KW"/>
</dbReference>
<dbReference type="Gene3D" id="3.40.50.20">
    <property type="match status" value="1"/>
</dbReference>
<dbReference type="Gene3D" id="3.30.1490.20">
    <property type="entry name" value="ATP-grasp fold, A domain"/>
    <property type="match status" value="1"/>
</dbReference>
<dbReference type="Gene3D" id="3.30.470.20">
    <property type="entry name" value="ATP-grasp fold, B domain"/>
    <property type="match status" value="1"/>
</dbReference>
<dbReference type="HAMAP" id="MF_00047">
    <property type="entry name" value="Dala_Dala_lig"/>
    <property type="match status" value="1"/>
</dbReference>
<dbReference type="InterPro" id="IPR011761">
    <property type="entry name" value="ATP-grasp"/>
</dbReference>
<dbReference type="InterPro" id="IPR013815">
    <property type="entry name" value="ATP_grasp_subdomain_1"/>
</dbReference>
<dbReference type="InterPro" id="IPR000291">
    <property type="entry name" value="D-Ala_lig_Van_CS"/>
</dbReference>
<dbReference type="InterPro" id="IPR005905">
    <property type="entry name" value="D_ala_D_ala"/>
</dbReference>
<dbReference type="InterPro" id="IPR011095">
    <property type="entry name" value="Dala_Dala_lig_C"/>
</dbReference>
<dbReference type="InterPro" id="IPR011127">
    <property type="entry name" value="Dala_Dala_lig_N"/>
</dbReference>
<dbReference type="InterPro" id="IPR016185">
    <property type="entry name" value="PreATP-grasp_dom_sf"/>
</dbReference>
<dbReference type="NCBIfam" id="TIGR01205">
    <property type="entry name" value="D_ala_D_alaTIGR"/>
    <property type="match status" value="1"/>
</dbReference>
<dbReference type="NCBIfam" id="NF002527">
    <property type="entry name" value="PRK01966.1-3"/>
    <property type="match status" value="1"/>
</dbReference>
<dbReference type="NCBIfam" id="NF002528">
    <property type="entry name" value="PRK01966.1-4"/>
    <property type="match status" value="1"/>
</dbReference>
<dbReference type="PANTHER" id="PTHR23132">
    <property type="entry name" value="D-ALANINE--D-ALANINE LIGASE"/>
    <property type="match status" value="1"/>
</dbReference>
<dbReference type="PANTHER" id="PTHR23132:SF25">
    <property type="entry name" value="D-ALANINE--D-ALANINE LIGASE A"/>
    <property type="match status" value="1"/>
</dbReference>
<dbReference type="Pfam" id="PF07478">
    <property type="entry name" value="Dala_Dala_lig_C"/>
    <property type="match status" value="1"/>
</dbReference>
<dbReference type="Pfam" id="PF01820">
    <property type="entry name" value="Dala_Dala_lig_N"/>
    <property type="match status" value="1"/>
</dbReference>
<dbReference type="PIRSF" id="PIRSF039102">
    <property type="entry name" value="Ddl/VanB"/>
    <property type="match status" value="1"/>
</dbReference>
<dbReference type="SUPFAM" id="SSF56059">
    <property type="entry name" value="Glutathione synthetase ATP-binding domain-like"/>
    <property type="match status" value="1"/>
</dbReference>
<dbReference type="SUPFAM" id="SSF52440">
    <property type="entry name" value="PreATP-grasp domain"/>
    <property type="match status" value="1"/>
</dbReference>
<dbReference type="PROSITE" id="PS50975">
    <property type="entry name" value="ATP_GRASP"/>
    <property type="match status" value="1"/>
</dbReference>
<dbReference type="PROSITE" id="PS00843">
    <property type="entry name" value="DALA_DALA_LIGASE_1"/>
    <property type="match status" value="1"/>
</dbReference>
<dbReference type="PROSITE" id="PS00844">
    <property type="entry name" value="DALA_DALA_LIGASE_2"/>
    <property type="match status" value="1"/>
</dbReference>
<accession>Q080C3</accession>
<organism>
    <name type="scientific">Shewanella frigidimarina (strain NCIMB 400)</name>
    <dbReference type="NCBI Taxonomy" id="318167"/>
    <lineage>
        <taxon>Bacteria</taxon>
        <taxon>Pseudomonadati</taxon>
        <taxon>Pseudomonadota</taxon>
        <taxon>Gammaproteobacteria</taxon>
        <taxon>Alteromonadales</taxon>
        <taxon>Shewanellaceae</taxon>
        <taxon>Shewanella</taxon>
    </lineage>
</organism>
<gene>
    <name evidence="2" type="primary">ddl</name>
    <name type="ordered locus">Sfri_2550</name>
</gene>